<organism>
    <name type="scientific">Clostridium botulinum (strain Eklund 17B / Type B)</name>
    <dbReference type="NCBI Taxonomy" id="935198"/>
    <lineage>
        <taxon>Bacteria</taxon>
        <taxon>Bacillati</taxon>
        <taxon>Bacillota</taxon>
        <taxon>Clostridia</taxon>
        <taxon>Eubacteriales</taxon>
        <taxon>Clostridiaceae</taxon>
        <taxon>Clostridium</taxon>
    </lineage>
</organism>
<accession>B2TQ14</accession>
<sequence length="278" mass="29382">MINEILDKVVRLLEEVRAKKPLVHSITNYITATDCANVILAVGGSPTMADYVKEVEEIASISSAVVLNMGVISDGMVESMILAGKSANKNNVPVIFDPVGAGVANFRNESAEKILSEVKIDIIRGNISEIKFICGLSSETKGVDASESDMNMGNDKKAIVAQELAKKLNCVVAITGVDDIISDGKRNVILSNGHKMLANVTGTGCMSSALCGAFAGASNDYFIAAICAILTMGISGEIAYEKSKGIGMGTFHTSLIDAISMMNENIIKEKAKVTTINR</sequence>
<name>THIM_CLOBB</name>
<evidence type="ECO:0000255" key="1">
    <source>
        <dbReference type="HAMAP-Rule" id="MF_00228"/>
    </source>
</evidence>
<protein>
    <recommendedName>
        <fullName evidence="1">Hydroxyethylthiazole kinase</fullName>
        <ecNumber evidence="1">2.7.1.50</ecNumber>
    </recommendedName>
    <alternativeName>
        <fullName evidence="1">4-methyl-5-beta-hydroxyethylthiazole kinase</fullName>
        <shortName evidence="1">TH kinase</shortName>
        <shortName evidence="1">Thz kinase</shortName>
    </alternativeName>
</protein>
<proteinExistence type="inferred from homology"/>
<keyword id="KW-0067">ATP-binding</keyword>
<keyword id="KW-0418">Kinase</keyword>
<keyword id="KW-0460">Magnesium</keyword>
<keyword id="KW-0479">Metal-binding</keyword>
<keyword id="KW-0547">Nucleotide-binding</keyword>
<keyword id="KW-0784">Thiamine biosynthesis</keyword>
<keyword id="KW-0808">Transferase</keyword>
<reference key="1">
    <citation type="submission" date="2008-04" db="EMBL/GenBank/DDBJ databases">
        <title>Complete sequence of Clostridium botulinum strain Eklund.</title>
        <authorList>
            <person name="Brinkac L.M."/>
            <person name="Brown J.L."/>
            <person name="Bruce D."/>
            <person name="Detter C."/>
            <person name="Munk C."/>
            <person name="Smith L.A."/>
            <person name="Smith T.J."/>
            <person name="Sutton G."/>
            <person name="Brettin T.S."/>
        </authorList>
    </citation>
    <scope>NUCLEOTIDE SEQUENCE [LARGE SCALE GENOMIC DNA]</scope>
    <source>
        <strain>Eklund 17B / Type B</strain>
    </source>
</reference>
<gene>
    <name evidence="1" type="primary">thiM</name>
    <name type="ordered locus">CLL_A3105</name>
</gene>
<feature type="chain" id="PRO_0000383842" description="Hydroxyethylthiazole kinase">
    <location>
        <begin position="1"/>
        <end position="278"/>
    </location>
</feature>
<feature type="binding site" evidence="1">
    <location>
        <position position="48"/>
    </location>
    <ligand>
        <name>substrate</name>
    </ligand>
</feature>
<feature type="binding site" evidence="1">
    <location>
        <position position="124"/>
    </location>
    <ligand>
        <name>ATP</name>
        <dbReference type="ChEBI" id="CHEBI:30616"/>
    </ligand>
</feature>
<feature type="binding site" evidence="1">
    <location>
        <position position="175"/>
    </location>
    <ligand>
        <name>ATP</name>
        <dbReference type="ChEBI" id="CHEBI:30616"/>
    </ligand>
</feature>
<feature type="binding site" evidence="1">
    <location>
        <position position="202"/>
    </location>
    <ligand>
        <name>substrate</name>
    </ligand>
</feature>
<comment type="function">
    <text evidence="1">Catalyzes the phosphorylation of the hydroxyl group of 4-methyl-5-beta-hydroxyethylthiazole (THZ).</text>
</comment>
<comment type="catalytic activity">
    <reaction evidence="1">
        <text>5-(2-hydroxyethyl)-4-methylthiazole + ATP = 4-methyl-5-(2-phosphooxyethyl)-thiazole + ADP + H(+)</text>
        <dbReference type="Rhea" id="RHEA:24212"/>
        <dbReference type="ChEBI" id="CHEBI:15378"/>
        <dbReference type="ChEBI" id="CHEBI:17957"/>
        <dbReference type="ChEBI" id="CHEBI:30616"/>
        <dbReference type="ChEBI" id="CHEBI:58296"/>
        <dbReference type="ChEBI" id="CHEBI:456216"/>
        <dbReference type="EC" id="2.7.1.50"/>
    </reaction>
</comment>
<comment type="cofactor">
    <cofactor evidence="1">
        <name>Mg(2+)</name>
        <dbReference type="ChEBI" id="CHEBI:18420"/>
    </cofactor>
</comment>
<comment type="pathway">
    <text evidence="1">Cofactor biosynthesis; thiamine diphosphate biosynthesis; 4-methyl-5-(2-phosphoethyl)-thiazole from 5-(2-hydroxyethyl)-4-methylthiazole: step 1/1.</text>
</comment>
<comment type="similarity">
    <text evidence="1">Belongs to the Thz kinase family.</text>
</comment>
<dbReference type="EC" id="2.7.1.50" evidence="1"/>
<dbReference type="EMBL" id="CP001056">
    <property type="protein sequence ID" value="ACD24375.1"/>
    <property type="molecule type" value="Genomic_DNA"/>
</dbReference>
<dbReference type="SMR" id="B2TQ14"/>
<dbReference type="KEGG" id="cbk:CLL_A3105"/>
<dbReference type="PATRIC" id="fig|935198.13.peg.3069"/>
<dbReference type="HOGENOM" id="CLU_019943_0_1_9"/>
<dbReference type="UniPathway" id="UPA00060">
    <property type="reaction ID" value="UER00139"/>
</dbReference>
<dbReference type="Proteomes" id="UP000001195">
    <property type="component" value="Chromosome"/>
</dbReference>
<dbReference type="GO" id="GO:0005524">
    <property type="term" value="F:ATP binding"/>
    <property type="evidence" value="ECO:0007669"/>
    <property type="project" value="UniProtKB-UniRule"/>
</dbReference>
<dbReference type="GO" id="GO:0004417">
    <property type="term" value="F:hydroxyethylthiazole kinase activity"/>
    <property type="evidence" value="ECO:0007669"/>
    <property type="project" value="UniProtKB-UniRule"/>
</dbReference>
<dbReference type="GO" id="GO:0000287">
    <property type="term" value="F:magnesium ion binding"/>
    <property type="evidence" value="ECO:0007669"/>
    <property type="project" value="UniProtKB-UniRule"/>
</dbReference>
<dbReference type="GO" id="GO:0009228">
    <property type="term" value="P:thiamine biosynthetic process"/>
    <property type="evidence" value="ECO:0007669"/>
    <property type="project" value="UniProtKB-KW"/>
</dbReference>
<dbReference type="GO" id="GO:0009229">
    <property type="term" value="P:thiamine diphosphate biosynthetic process"/>
    <property type="evidence" value="ECO:0007669"/>
    <property type="project" value="UniProtKB-UniRule"/>
</dbReference>
<dbReference type="CDD" id="cd01170">
    <property type="entry name" value="THZ_kinase"/>
    <property type="match status" value="1"/>
</dbReference>
<dbReference type="Gene3D" id="3.40.1190.20">
    <property type="match status" value="1"/>
</dbReference>
<dbReference type="HAMAP" id="MF_00228">
    <property type="entry name" value="Thz_kinase"/>
    <property type="match status" value="1"/>
</dbReference>
<dbReference type="InterPro" id="IPR000417">
    <property type="entry name" value="Hyethyz_kinase"/>
</dbReference>
<dbReference type="InterPro" id="IPR029056">
    <property type="entry name" value="Ribokinase-like"/>
</dbReference>
<dbReference type="NCBIfam" id="NF006830">
    <property type="entry name" value="PRK09355.1"/>
    <property type="match status" value="1"/>
</dbReference>
<dbReference type="NCBIfam" id="TIGR00694">
    <property type="entry name" value="thiM"/>
    <property type="match status" value="1"/>
</dbReference>
<dbReference type="Pfam" id="PF02110">
    <property type="entry name" value="HK"/>
    <property type="match status" value="1"/>
</dbReference>
<dbReference type="PIRSF" id="PIRSF000513">
    <property type="entry name" value="Thz_kinase"/>
    <property type="match status" value="1"/>
</dbReference>
<dbReference type="PRINTS" id="PR01099">
    <property type="entry name" value="HYETHTZKNASE"/>
</dbReference>
<dbReference type="SUPFAM" id="SSF53613">
    <property type="entry name" value="Ribokinase-like"/>
    <property type="match status" value="1"/>
</dbReference>